<dbReference type="EMBL" id="CP000609">
    <property type="protein sequence ID" value="ABO35492.1"/>
    <property type="molecule type" value="Genomic_DNA"/>
</dbReference>
<dbReference type="RefSeq" id="WP_011868945.1">
    <property type="nucleotide sequence ID" value="NC_009135.1"/>
</dbReference>
<dbReference type="SMR" id="A4FZ58"/>
<dbReference type="STRING" id="402880.MmarC5_1194"/>
<dbReference type="GeneID" id="4928858"/>
<dbReference type="KEGG" id="mmq:MmarC5_1194"/>
<dbReference type="eggNOG" id="arCOG04182">
    <property type="taxonomic scope" value="Archaea"/>
</dbReference>
<dbReference type="HOGENOM" id="CLU_107248_3_1_2"/>
<dbReference type="OrthoDB" id="27533at2157"/>
<dbReference type="Proteomes" id="UP000000253">
    <property type="component" value="Chromosome"/>
</dbReference>
<dbReference type="GO" id="GO:1990904">
    <property type="term" value="C:ribonucleoprotein complex"/>
    <property type="evidence" value="ECO:0007669"/>
    <property type="project" value="UniProtKB-KW"/>
</dbReference>
<dbReference type="GO" id="GO:0005840">
    <property type="term" value="C:ribosome"/>
    <property type="evidence" value="ECO:0007669"/>
    <property type="project" value="UniProtKB-KW"/>
</dbReference>
<dbReference type="GO" id="GO:0003735">
    <property type="term" value="F:structural constituent of ribosome"/>
    <property type="evidence" value="ECO:0007669"/>
    <property type="project" value="InterPro"/>
</dbReference>
<dbReference type="GO" id="GO:0006412">
    <property type="term" value="P:translation"/>
    <property type="evidence" value="ECO:0007669"/>
    <property type="project" value="UniProtKB-UniRule"/>
</dbReference>
<dbReference type="Gene3D" id="3.30.70.330">
    <property type="match status" value="1"/>
</dbReference>
<dbReference type="HAMAP" id="MF_00545">
    <property type="entry name" value="Ribosomal_eS24"/>
    <property type="match status" value="1"/>
</dbReference>
<dbReference type="InterPro" id="IPR012677">
    <property type="entry name" value="Nucleotide-bd_a/b_plait_sf"/>
</dbReference>
<dbReference type="InterPro" id="IPR001976">
    <property type="entry name" value="Ribosomal_eS24"/>
</dbReference>
<dbReference type="InterPro" id="IPR018098">
    <property type="entry name" value="Ribosomal_eS24_CS"/>
</dbReference>
<dbReference type="InterPro" id="IPR012678">
    <property type="entry name" value="Ribosomal_uL23/eL15/eS24_sf"/>
</dbReference>
<dbReference type="Pfam" id="PF01282">
    <property type="entry name" value="Ribosomal_S24e"/>
    <property type="match status" value="1"/>
</dbReference>
<dbReference type="SUPFAM" id="SSF54189">
    <property type="entry name" value="Ribosomal proteins S24e, L23 and L15e"/>
    <property type="match status" value="1"/>
</dbReference>
<dbReference type="PROSITE" id="PS00529">
    <property type="entry name" value="RIBOSOMAL_S24E"/>
    <property type="match status" value="1"/>
</dbReference>
<feature type="chain" id="PRO_1000017742" description="Small ribosomal subunit protein eS24">
    <location>
        <begin position="1"/>
        <end position="102"/>
    </location>
</feature>
<name>RS24_METM5</name>
<accession>A4FZ58</accession>
<protein>
    <recommendedName>
        <fullName evidence="1">Small ribosomal subunit protein eS24</fullName>
    </recommendedName>
    <alternativeName>
        <fullName evidence="2">30S ribosomal protein S24e</fullName>
    </alternativeName>
</protein>
<organism>
    <name type="scientific">Methanococcus maripaludis (strain C5 / ATCC BAA-1333)</name>
    <dbReference type="NCBI Taxonomy" id="402880"/>
    <lineage>
        <taxon>Archaea</taxon>
        <taxon>Methanobacteriati</taxon>
        <taxon>Methanobacteriota</taxon>
        <taxon>Methanomada group</taxon>
        <taxon>Methanococci</taxon>
        <taxon>Methanococcales</taxon>
        <taxon>Methanococcaceae</taxon>
        <taxon>Methanococcus</taxon>
    </lineage>
</organism>
<proteinExistence type="inferred from homology"/>
<gene>
    <name evidence="1" type="primary">rps24e</name>
    <name type="ordered locus">MmarC5_1194</name>
</gene>
<comment type="similarity">
    <text evidence="1">Belongs to the eukaryotic ribosomal protein eS24 family.</text>
</comment>
<sequence>MDISIISDKNNPLLQRREVKFTVSFDAATPSIKDVKMKLVAVLNADKKVLVVDTLDQIFGKLEAEGYAKIYNDEKAMETIETKSVLEKNKIEEEAEAEVAEE</sequence>
<keyword id="KW-0687">Ribonucleoprotein</keyword>
<keyword id="KW-0689">Ribosomal protein</keyword>
<evidence type="ECO:0000255" key="1">
    <source>
        <dbReference type="HAMAP-Rule" id="MF_00545"/>
    </source>
</evidence>
<evidence type="ECO:0000305" key="2"/>
<reference key="1">
    <citation type="submission" date="2007-03" db="EMBL/GenBank/DDBJ databases">
        <title>Complete sequence of chromosome of Methanococcus maripaludis C5.</title>
        <authorList>
            <consortium name="US DOE Joint Genome Institute"/>
            <person name="Copeland A."/>
            <person name="Lucas S."/>
            <person name="Lapidus A."/>
            <person name="Barry K."/>
            <person name="Glavina del Rio T."/>
            <person name="Dalin E."/>
            <person name="Tice H."/>
            <person name="Pitluck S."/>
            <person name="Chertkov O."/>
            <person name="Brettin T."/>
            <person name="Bruce D."/>
            <person name="Han C."/>
            <person name="Detter J.C."/>
            <person name="Schmutz J."/>
            <person name="Larimer F."/>
            <person name="Land M."/>
            <person name="Hauser L."/>
            <person name="Kyrpides N."/>
            <person name="Mikhailova N."/>
            <person name="Sieprawska-Lupa M."/>
            <person name="Whitman W.B."/>
            <person name="Richardson P."/>
        </authorList>
    </citation>
    <scope>NUCLEOTIDE SEQUENCE [LARGE SCALE GENOMIC DNA]</scope>
    <source>
        <strain>C5 / ATCC BAA-1333</strain>
    </source>
</reference>